<name>SSRP_RHIEC</name>
<proteinExistence type="inferred from homology"/>
<organism>
    <name type="scientific">Rhizobium etli (strain ATCC 51251 / DSM 11541 / JCM 21823 / NBRC 15573 / CFN 42)</name>
    <dbReference type="NCBI Taxonomy" id="347834"/>
    <lineage>
        <taxon>Bacteria</taxon>
        <taxon>Pseudomonadati</taxon>
        <taxon>Pseudomonadota</taxon>
        <taxon>Alphaproteobacteria</taxon>
        <taxon>Hyphomicrobiales</taxon>
        <taxon>Rhizobiaceae</taxon>
        <taxon>Rhizobium/Agrobacterium group</taxon>
        <taxon>Rhizobium</taxon>
    </lineage>
</organism>
<protein>
    <recommendedName>
        <fullName evidence="1">SsrA-binding protein</fullName>
    </recommendedName>
    <alternativeName>
        <fullName evidence="1">Small protein B</fullName>
    </alternativeName>
</protein>
<dbReference type="EMBL" id="CP000133">
    <property type="protein sequence ID" value="ABC90185.1"/>
    <property type="molecule type" value="Genomic_DNA"/>
</dbReference>
<dbReference type="RefSeq" id="WP_004675044.1">
    <property type="nucleotide sequence ID" value="NC_007761.1"/>
</dbReference>
<dbReference type="SMR" id="Q2KAF1"/>
<dbReference type="GeneID" id="91147844"/>
<dbReference type="KEGG" id="ret:RHE_CH01382"/>
<dbReference type="eggNOG" id="COG0691">
    <property type="taxonomic scope" value="Bacteria"/>
</dbReference>
<dbReference type="HOGENOM" id="CLU_108953_0_1_5"/>
<dbReference type="OrthoDB" id="9805462at2"/>
<dbReference type="Proteomes" id="UP000001936">
    <property type="component" value="Chromosome"/>
</dbReference>
<dbReference type="GO" id="GO:0005829">
    <property type="term" value="C:cytosol"/>
    <property type="evidence" value="ECO:0007669"/>
    <property type="project" value="TreeGrafter"/>
</dbReference>
<dbReference type="GO" id="GO:0003723">
    <property type="term" value="F:RNA binding"/>
    <property type="evidence" value="ECO:0007669"/>
    <property type="project" value="UniProtKB-UniRule"/>
</dbReference>
<dbReference type="GO" id="GO:0070929">
    <property type="term" value="P:trans-translation"/>
    <property type="evidence" value="ECO:0007669"/>
    <property type="project" value="UniProtKB-UniRule"/>
</dbReference>
<dbReference type="CDD" id="cd09294">
    <property type="entry name" value="SmpB"/>
    <property type="match status" value="1"/>
</dbReference>
<dbReference type="Gene3D" id="2.40.280.10">
    <property type="match status" value="1"/>
</dbReference>
<dbReference type="HAMAP" id="MF_00023">
    <property type="entry name" value="SmpB"/>
    <property type="match status" value="1"/>
</dbReference>
<dbReference type="InterPro" id="IPR023620">
    <property type="entry name" value="SmpB"/>
</dbReference>
<dbReference type="InterPro" id="IPR000037">
    <property type="entry name" value="SsrA-bd_prot"/>
</dbReference>
<dbReference type="InterPro" id="IPR020081">
    <property type="entry name" value="SsrA-bd_prot_CS"/>
</dbReference>
<dbReference type="NCBIfam" id="NF003843">
    <property type="entry name" value="PRK05422.1"/>
    <property type="match status" value="1"/>
</dbReference>
<dbReference type="NCBIfam" id="TIGR00086">
    <property type="entry name" value="smpB"/>
    <property type="match status" value="1"/>
</dbReference>
<dbReference type="PANTHER" id="PTHR30308:SF2">
    <property type="entry name" value="SSRA-BINDING PROTEIN"/>
    <property type="match status" value="1"/>
</dbReference>
<dbReference type="PANTHER" id="PTHR30308">
    <property type="entry name" value="TMRNA-BINDING COMPONENT OF TRANS-TRANSLATION TAGGING COMPLEX"/>
    <property type="match status" value="1"/>
</dbReference>
<dbReference type="Pfam" id="PF01668">
    <property type="entry name" value="SmpB"/>
    <property type="match status" value="1"/>
</dbReference>
<dbReference type="SUPFAM" id="SSF74982">
    <property type="entry name" value="Small protein B (SmpB)"/>
    <property type="match status" value="1"/>
</dbReference>
<dbReference type="PROSITE" id="PS01317">
    <property type="entry name" value="SSRP"/>
    <property type="match status" value="1"/>
</dbReference>
<feature type="chain" id="PRO_1000002123" description="SsrA-binding protein">
    <location>
        <begin position="1"/>
        <end position="159"/>
    </location>
</feature>
<feature type="region of interest" description="Disordered" evidence="2">
    <location>
        <begin position="131"/>
        <end position="159"/>
    </location>
</feature>
<feature type="compositionally biased region" description="Basic and acidic residues" evidence="2">
    <location>
        <begin position="137"/>
        <end position="159"/>
    </location>
</feature>
<accession>Q2KAF1</accession>
<keyword id="KW-0963">Cytoplasm</keyword>
<keyword id="KW-1185">Reference proteome</keyword>
<keyword id="KW-0694">RNA-binding</keyword>
<comment type="function">
    <text evidence="1">Required for rescue of stalled ribosomes mediated by trans-translation. Binds to transfer-messenger RNA (tmRNA), required for stable association of tmRNA with ribosomes. tmRNA and SmpB together mimic tRNA shape, replacing the anticodon stem-loop with SmpB. tmRNA is encoded by the ssrA gene; the 2 termini fold to resemble tRNA(Ala) and it encodes a 'tag peptide', a short internal open reading frame. During trans-translation Ala-aminoacylated tmRNA acts like a tRNA, entering the A-site of stalled ribosomes, displacing the stalled mRNA. The ribosome then switches to translate the ORF on the tmRNA; the nascent peptide is terminated with the 'tag peptide' encoded by the tmRNA and targeted for degradation. The ribosome is freed to recommence translation, which seems to be the essential function of trans-translation.</text>
</comment>
<comment type="subcellular location">
    <subcellularLocation>
        <location evidence="1">Cytoplasm</location>
    </subcellularLocation>
    <text evidence="1">The tmRNA-SmpB complex associates with stalled 70S ribosomes.</text>
</comment>
<comment type="similarity">
    <text evidence="1">Belongs to the SmpB family.</text>
</comment>
<gene>
    <name evidence="1" type="primary">smpB</name>
    <name type="ordered locus">RHE_CH01382</name>
</gene>
<sequence>MAPKGSQRVVNKVVAENRKARFNYEIIDTYEAGLVLKGTEVKSLREGKANIAESYASDEDGEIWLINSYLPEYLQANRFNHEPRRRRKLLLSGREIHRLRSAVNREGMTLVPLKIYFNDRGRAKMELALAKGKKLHDKRESEKERDWNRQKSRLLKDNG</sequence>
<evidence type="ECO:0000255" key="1">
    <source>
        <dbReference type="HAMAP-Rule" id="MF_00023"/>
    </source>
</evidence>
<evidence type="ECO:0000256" key="2">
    <source>
        <dbReference type="SAM" id="MobiDB-lite"/>
    </source>
</evidence>
<reference key="1">
    <citation type="journal article" date="2006" name="Proc. Natl. Acad. Sci. U.S.A.">
        <title>The partitioned Rhizobium etli genome: genetic and metabolic redundancy in seven interacting replicons.</title>
        <authorList>
            <person name="Gonzalez V."/>
            <person name="Santamaria R.I."/>
            <person name="Bustos P."/>
            <person name="Hernandez-Gonzalez I."/>
            <person name="Medrano-Soto A."/>
            <person name="Moreno-Hagelsieb G."/>
            <person name="Janga S.C."/>
            <person name="Ramirez M.A."/>
            <person name="Jimenez-Jacinto V."/>
            <person name="Collado-Vides J."/>
            <person name="Davila G."/>
        </authorList>
    </citation>
    <scope>NUCLEOTIDE SEQUENCE [LARGE SCALE GENOMIC DNA]</scope>
    <source>
        <strain>ATCC 51251 / DSM 11541 / JCM 21823 / NBRC 15573 / CFN 42</strain>
    </source>
</reference>